<comment type="function">
    <text evidence="1">Part of the phosphoribosylformylglycinamidine synthase complex involved in the purines biosynthetic pathway. Catalyzes the ATP-dependent conversion of formylglycinamide ribonucleotide (FGAR) and glutamine to yield formylglycinamidine ribonucleotide (FGAM) and glutamate. The FGAM synthase complex is composed of three subunits. PurQ produces an ammonia molecule by converting glutamine to glutamate. PurL transfers the ammonia molecule to FGAR to form FGAM in an ATP-dependent manner. PurS interacts with PurQ and PurL and is thought to assist in the transfer of the ammonia molecule from PurQ to PurL.</text>
</comment>
<comment type="catalytic activity">
    <reaction evidence="1">
        <text>N(2)-formyl-N(1)-(5-phospho-beta-D-ribosyl)glycinamide + L-glutamine + ATP + H2O = 2-formamido-N(1)-(5-O-phospho-beta-D-ribosyl)acetamidine + L-glutamate + ADP + phosphate + H(+)</text>
        <dbReference type="Rhea" id="RHEA:17129"/>
        <dbReference type="ChEBI" id="CHEBI:15377"/>
        <dbReference type="ChEBI" id="CHEBI:15378"/>
        <dbReference type="ChEBI" id="CHEBI:29985"/>
        <dbReference type="ChEBI" id="CHEBI:30616"/>
        <dbReference type="ChEBI" id="CHEBI:43474"/>
        <dbReference type="ChEBI" id="CHEBI:58359"/>
        <dbReference type="ChEBI" id="CHEBI:147286"/>
        <dbReference type="ChEBI" id="CHEBI:147287"/>
        <dbReference type="ChEBI" id="CHEBI:456216"/>
        <dbReference type="EC" id="6.3.5.3"/>
    </reaction>
</comment>
<comment type="catalytic activity">
    <reaction evidence="1">
        <text>L-glutamine + H2O = L-glutamate + NH4(+)</text>
        <dbReference type="Rhea" id="RHEA:15889"/>
        <dbReference type="ChEBI" id="CHEBI:15377"/>
        <dbReference type="ChEBI" id="CHEBI:28938"/>
        <dbReference type="ChEBI" id="CHEBI:29985"/>
        <dbReference type="ChEBI" id="CHEBI:58359"/>
        <dbReference type="EC" id="3.5.1.2"/>
    </reaction>
</comment>
<comment type="pathway">
    <text evidence="1">Purine metabolism; IMP biosynthesis via de novo pathway; 5-amino-1-(5-phospho-D-ribosyl)imidazole from N(2)-formyl-N(1)-(5-phospho-D-ribosyl)glycinamide: step 1/2.</text>
</comment>
<comment type="subunit">
    <text evidence="1">Part of the FGAM synthase complex composed of 1 PurL, 1 PurQ and 2 PurS subunits.</text>
</comment>
<comment type="subcellular location">
    <subcellularLocation>
        <location evidence="1">Cytoplasm</location>
    </subcellularLocation>
</comment>
<name>PURQ_PICTO</name>
<dbReference type="EC" id="6.3.5.3" evidence="1"/>
<dbReference type="EC" id="3.5.1.2" evidence="1"/>
<dbReference type="EMBL" id="AE017261">
    <property type="protein sequence ID" value="AAT43393.1"/>
    <property type="molecule type" value="Genomic_DNA"/>
</dbReference>
<dbReference type="RefSeq" id="WP_011177609.1">
    <property type="nucleotide sequence ID" value="NC_005877.1"/>
</dbReference>
<dbReference type="SMR" id="Q6L0V9"/>
<dbReference type="FunCoup" id="Q6L0V9">
    <property type="interactions" value="22"/>
</dbReference>
<dbReference type="STRING" id="263820.PTO0808"/>
<dbReference type="PaxDb" id="263820-PTO0808"/>
<dbReference type="GeneID" id="2844070"/>
<dbReference type="KEGG" id="pto:PTO0808"/>
<dbReference type="PATRIC" id="fig|263820.9.peg.844"/>
<dbReference type="eggNOG" id="arCOG00102">
    <property type="taxonomic scope" value="Archaea"/>
</dbReference>
<dbReference type="HOGENOM" id="CLU_001031_3_0_2"/>
<dbReference type="InParanoid" id="Q6L0V9"/>
<dbReference type="OrthoDB" id="6486at2157"/>
<dbReference type="UniPathway" id="UPA00074">
    <property type="reaction ID" value="UER00128"/>
</dbReference>
<dbReference type="Proteomes" id="UP000000438">
    <property type="component" value="Chromosome"/>
</dbReference>
<dbReference type="GO" id="GO:0005737">
    <property type="term" value="C:cytoplasm"/>
    <property type="evidence" value="ECO:0007669"/>
    <property type="project" value="UniProtKB-SubCell"/>
</dbReference>
<dbReference type="GO" id="GO:0005524">
    <property type="term" value="F:ATP binding"/>
    <property type="evidence" value="ECO:0007669"/>
    <property type="project" value="UniProtKB-KW"/>
</dbReference>
<dbReference type="GO" id="GO:0004359">
    <property type="term" value="F:glutaminase activity"/>
    <property type="evidence" value="ECO:0007669"/>
    <property type="project" value="UniProtKB-EC"/>
</dbReference>
<dbReference type="GO" id="GO:0004642">
    <property type="term" value="F:phosphoribosylformylglycinamidine synthase activity"/>
    <property type="evidence" value="ECO:0007669"/>
    <property type="project" value="UniProtKB-UniRule"/>
</dbReference>
<dbReference type="GO" id="GO:0006189">
    <property type="term" value="P:'de novo' IMP biosynthetic process"/>
    <property type="evidence" value="ECO:0007669"/>
    <property type="project" value="UniProtKB-UniRule"/>
</dbReference>
<dbReference type="CDD" id="cd01740">
    <property type="entry name" value="GATase1_FGAR_AT"/>
    <property type="match status" value="1"/>
</dbReference>
<dbReference type="Gene3D" id="3.40.50.880">
    <property type="match status" value="1"/>
</dbReference>
<dbReference type="HAMAP" id="MF_00421">
    <property type="entry name" value="PurQ"/>
    <property type="match status" value="1"/>
</dbReference>
<dbReference type="InterPro" id="IPR029062">
    <property type="entry name" value="Class_I_gatase-like"/>
</dbReference>
<dbReference type="InterPro" id="IPR010075">
    <property type="entry name" value="PRibForGlyAmidine_synth_PurQ"/>
</dbReference>
<dbReference type="NCBIfam" id="TIGR01737">
    <property type="entry name" value="FGAM_synth_I"/>
    <property type="match status" value="1"/>
</dbReference>
<dbReference type="NCBIfam" id="NF002252">
    <property type="entry name" value="PRK01175.1"/>
    <property type="match status" value="1"/>
</dbReference>
<dbReference type="PANTHER" id="PTHR10099">
    <property type="entry name" value="PHOSPHORIBOSYLFORMYLGLYCINAMIDINE SYNTHASE"/>
    <property type="match status" value="1"/>
</dbReference>
<dbReference type="PANTHER" id="PTHR10099:SF1">
    <property type="entry name" value="PHOSPHORIBOSYLFORMYLGLYCINAMIDINE SYNTHASE"/>
    <property type="match status" value="1"/>
</dbReference>
<dbReference type="Pfam" id="PF13507">
    <property type="entry name" value="GATase_5"/>
    <property type="match status" value="1"/>
</dbReference>
<dbReference type="PIRSF" id="PIRSF001586">
    <property type="entry name" value="FGAM_synth_I"/>
    <property type="match status" value="1"/>
</dbReference>
<dbReference type="SMART" id="SM01211">
    <property type="entry name" value="GATase_5"/>
    <property type="match status" value="1"/>
</dbReference>
<dbReference type="SUPFAM" id="SSF52317">
    <property type="entry name" value="Class I glutamine amidotransferase-like"/>
    <property type="match status" value="1"/>
</dbReference>
<dbReference type="PROSITE" id="PS51273">
    <property type="entry name" value="GATASE_TYPE_1"/>
    <property type="match status" value="1"/>
</dbReference>
<sequence length="248" mass="28271">MDSKRAMVLRMEGTNNEEEAFLSLKRAGFEPEYVHINDLARKRKFIDDYNLMFIPGGFSAGDYIRAGAIFAARLRPFLSDINKFIDSGRFIIGVCNGFQVLTELGLFFNGDRKIALTVNESNRFECRFTYIRLSTKKVLSGLGNRPFQVPVAHLEGRVYCDNKTLDELIENDQIIFRYVDNNGNYSGYPWNPNGSIMNIAGITNDSGNVIGMMPHPERVYYPYQMSGNERNSDKGTGEIFFRILYNST</sequence>
<feature type="chain" id="PRO_0000100613" description="Phosphoribosylformylglycinamidine synthase subunit PurQ">
    <location>
        <begin position="1"/>
        <end position="248"/>
    </location>
</feature>
<feature type="domain" description="Glutamine amidotransferase type-1" evidence="1">
    <location>
        <begin position="6"/>
        <end position="248"/>
    </location>
</feature>
<feature type="active site" description="Nucleophile" evidence="1">
    <location>
        <position position="95"/>
    </location>
</feature>
<feature type="active site" evidence="1">
    <location>
        <position position="215"/>
    </location>
</feature>
<feature type="active site" evidence="1">
    <location>
        <position position="217"/>
    </location>
</feature>
<gene>
    <name evidence="1" type="primary">purQ</name>
    <name type="ordered locus">PTO0808</name>
</gene>
<organism>
    <name type="scientific">Picrophilus torridus (strain ATCC 700027 / DSM 9790 / JCM 10055 / NBRC 100828 / KAW 2/3)</name>
    <dbReference type="NCBI Taxonomy" id="1122961"/>
    <lineage>
        <taxon>Archaea</taxon>
        <taxon>Methanobacteriati</taxon>
        <taxon>Thermoplasmatota</taxon>
        <taxon>Thermoplasmata</taxon>
        <taxon>Thermoplasmatales</taxon>
        <taxon>Picrophilaceae</taxon>
        <taxon>Picrophilus</taxon>
    </lineage>
</organism>
<protein>
    <recommendedName>
        <fullName evidence="1">Phosphoribosylformylglycinamidine synthase subunit PurQ</fullName>
        <shortName evidence="1">FGAM synthase</shortName>
        <ecNumber evidence="1">6.3.5.3</ecNumber>
    </recommendedName>
    <alternativeName>
        <fullName evidence="1">Formylglycinamide ribonucleotide amidotransferase subunit I</fullName>
        <shortName evidence="1">FGAR amidotransferase I</shortName>
        <shortName evidence="1">FGAR-AT I</shortName>
    </alternativeName>
    <alternativeName>
        <fullName evidence="1">Glutaminase PurQ</fullName>
        <ecNumber evidence="1">3.5.1.2</ecNumber>
    </alternativeName>
    <alternativeName>
        <fullName evidence="1">Phosphoribosylformylglycinamidine synthase subunit I</fullName>
    </alternativeName>
</protein>
<proteinExistence type="inferred from homology"/>
<reference key="1">
    <citation type="journal article" date="2004" name="Proc. Natl. Acad. Sci. U.S.A.">
        <title>Genome sequence of Picrophilus torridus and its implications for life around pH 0.</title>
        <authorList>
            <person name="Fuetterer O."/>
            <person name="Angelov A."/>
            <person name="Liesegang H."/>
            <person name="Gottschalk G."/>
            <person name="Schleper C."/>
            <person name="Schepers B."/>
            <person name="Dock C."/>
            <person name="Antranikian G."/>
            <person name="Liebl W."/>
        </authorList>
    </citation>
    <scope>NUCLEOTIDE SEQUENCE [LARGE SCALE GENOMIC DNA]</scope>
    <source>
        <strain>ATCC 700027 / DSM 9790 / JCM 10055 / NBRC 100828 / KAW 2/3</strain>
    </source>
</reference>
<evidence type="ECO:0000255" key="1">
    <source>
        <dbReference type="HAMAP-Rule" id="MF_00421"/>
    </source>
</evidence>
<keyword id="KW-0067">ATP-binding</keyword>
<keyword id="KW-0963">Cytoplasm</keyword>
<keyword id="KW-0315">Glutamine amidotransferase</keyword>
<keyword id="KW-0378">Hydrolase</keyword>
<keyword id="KW-0436">Ligase</keyword>
<keyword id="KW-0547">Nucleotide-binding</keyword>
<keyword id="KW-0658">Purine biosynthesis</keyword>
<accession>Q6L0V9</accession>